<keyword id="KW-1185">Reference proteome</keyword>
<keyword id="KW-0687">Ribonucleoprotein</keyword>
<keyword id="KW-0689">Ribosomal protein</keyword>
<feature type="chain" id="PRO_1000080349" description="Large ribosomal subunit protein bL19">
    <location>
        <begin position="1"/>
        <end position="124"/>
    </location>
</feature>
<protein>
    <recommendedName>
        <fullName evidence="1">Large ribosomal subunit protein bL19</fullName>
    </recommendedName>
    <alternativeName>
        <fullName evidence="2">50S ribosomal protein L19</fullName>
    </alternativeName>
</protein>
<organism>
    <name type="scientific">Dinoroseobacter shibae (strain DSM 16493 / NCIMB 14021 / DFL 12)</name>
    <dbReference type="NCBI Taxonomy" id="398580"/>
    <lineage>
        <taxon>Bacteria</taxon>
        <taxon>Pseudomonadati</taxon>
        <taxon>Pseudomonadota</taxon>
        <taxon>Alphaproteobacteria</taxon>
        <taxon>Rhodobacterales</taxon>
        <taxon>Roseobacteraceae</taxon>
        <taxon>Dinoroseobacter</taxon>
    </lineage>
</organism>
<sequence>MNLIAQLEAEQIAELGKDIPDFKAGDTIRVGYKVTEGTRSRVQNYEGVCIARKGGDGIAASFTVRKISFGEGVERVFPLHSTNIDSIEVVRRGKVRRAKLYYLRARRGKSARIAEQTNYKPKSN</sequence>
<dbReference type="EMBL" id="CP000830">
    <property type="protein sequence ID" value="ABV92090.1"/>
    <property type="molecule type" value="Genomic_DNA"/>
</dbReference>
<dbReference type="RefSeq" id="WP_012177020.1">
    <property type="nucleotide sequence ID" value="NC_009952.1"/>
</dbReference>
<dbReference type="SMR" id="A8LMB3"/>
<dbReference type="STRING" id="398580.Dshi_0341"/>
<dbReference type="KEGG" id="dsh:Dshi_0341"/>
<dbReference type="eggNOG" id="COG0335">
    <property type="taxonomic scope" value="Bacteria"/>
</dbReference>
<dbReference type="HOGENOM" id="CLU_103507_2_1_5"/>
<dbReference type="OrthoDB" id="9803541at2"/>
<dbReference type="Proteomes" id="UP000006833">
    <property type="component" value="Chromosome"/>
</dbReference>
<dbReference type="GO" id="GO:0022625">
    <property type="term" value="C:cytosolic large ribosomal subunit"/>
    <property type="evidence" value="ECO:0007669"/>
    <property type="project" value="TreeGrafter"/>
</dbReference>
<dbReference type="GO" id="GO:0003735">
    <property type="term" value="F:structural constituent of ribosome"/>
    <property type="evidence" value="ECO:0007669"/>
    <property type="project" value="InterPro"/>
</dbReference>
<dbReference type="GO" id="GO:0006412">
    <property type="term" value="P:translation"/>
    <property type="evidence" value="ECO:0007669"/>
    <property type="project" value="UniProtKB-UniRule"/>
</dbReference>
<dbReference type="FunFam" id="2.30.30.790:FF:000001">
    <property type="entry name" value="50S ribosomal protein L19"/>
    <property type="match status" value="1"/>
</dbReference>
<dbReference type="Gene3D" id="2.30.30.790">
    <property type="match status" value="1"/>
</dbReference>
<dbReference type="HAMAP" id="MF_00402">
    <property type="entry name" value="Ribosomal_bL19"/>
    <property type="match status" value="1"/>
</dbReference>
<dbReference type="InterPro" id="IPR001857">
    <property type="entry name" value="Ribosomal_bL19"/>
</dbReference>
<dbReference type="InterPro" id="IPR018257">
    <property type="entry name" value="Ribosomal_bL19_CS"/>
</dbReference>
<dbReference type="InterPro" id="IPR038657">
    <property type="entry name" value="Ribosomal_bL19_sf"/>
</dbReference>
<dbReference type="InterPro" id="IPR008991">
    <property type="entry name" value="Translation_prot_SH3-like_sf"/>
</dbReference>
<dbReference type="NCBIfam" id="TIGR01024">
    <property type="entry name" value="rplS_bact"/>
    <property type="match status" value="1"/>
</dbReference>
<dbReference type="PANTHER" id="PTHR15680:SF9">
    <property type="entry name" value="LARGE RIBOSOMAL SUBUNIT PROTEIN BL19M"/>
    <property type="match status" value="1"/>
</dbReference>
<dbReference type="PANTHER" id="PTHR15680">
    <property type="entry name" value="RIBOSOMAL PROTEIN L19"/>
    <property type="match status" value="1"/>
</dbReference>
<dbReference type="Pfam" id="PF01245">
    <property type="entry name" value="Ribosomal_L19"/>
    <property type="match status" value="1"/>
</dbReference>
<dbReference type="PIRSF" id="PIRSF002191">
    <property type="entry name" value="Ribosomal_L19"/>
    <property type="match status" value="1"/>
</dbReference>
<dbReference type="PRINTS" id="PR00061">
    <property type="entry name" value="RIBOSOMALL19"/>
</dbReference>
<dbReference type="SUPFAM" id="SSF50104">
    <property type="entry name" value="Translation proteins SH3-like domain"/>
    <property type="match status" value="1"/>
</dbReference>
<dbReference type="PROSITE" id="PS01015">
    <property type="entry name" value="RIBOSOMAL_L19"/>
    <property type="match status" value="1"/>
</dbReference>
<reference key="1">
    <citation type="journal article" date="2010" name="ISME J.">
        <title>The complete genome sequence of the algal symbiont Dinoroseobacter shibae: a hitchhiker's guide to life in the sea.</title>
        <authorList>
            <person name="Wagner-Dobler I."/>
            <person name="Ballhausen B."/>
            <person name="Berger M."/>
            <person name="Brinkhoff T."/>
            <person name="Buchholz I."/>
            <person name="Bunk B."/>
            <person name="Cypionka H."/>
            <person name="Daniel R."/>
            <person name="Drepper T."/>
            <person name="Gerdts G."/>
            <person name="Hahnke S."/>
            <person name="Han C."/>
            <person name="Jahn D."/>
            <person name="Kalhoefer D."/>
            <person name="Kiss H."/>
            <person name="Klenk H.P."/>
            <person name="Kyrpides N."/>
            <person name="Liebl W."/>
            <person name="Liesegang H."/>
            <person name="Meincke L."/>
            <person name="Pati A."/>
            <person name="Petersen J."/>
            <person name="Piekarski T."/>
            <person name="Pommerenke C."/>
            <person name="Pradella S."/>
            <person name="Pukall R."/>
            <person name="Rabus R."/>
            <person name="Stackebrandt E."/>
            <person name="Thole S."/>
            <person name="Thompson L."/>
            <person name="Tielen P."/>
            <person name="Tomasch J."/>
            <person name="von Jan M."/>
            <person name="Wanphrut N."/>
            <person name="Wichels A."/>
            <person name="Zech H."/>
            <person name="Simon M."/>
        </authorList>
    </citation>
    <scope>NUCLEOTIDE SEQUENCE [LARGE SCALE GENOMIC DNA]</scope>
    <source>
        <strain>DSM 16493 / NCIMB 14021 / DFL 12</strain>
    </source>
</reference>
<evidence type="ECO:0000255" key="1">
    <source>
        <dbReference type="HAMAP-Rule" id="MF_00402"/>
    </source>
</evidence>
<evidence type="ECO:0000305" key="2"/>
<accession>A8LMB3</accession>
<comment type="function">
    <text evidence="1">This protein is located at the 30S-50S ribosomal subunit interface and may play a role in the structure and function of the aminoacyl-tRNA binding site.</text>
</comment>
<comment type="similarity">
    <text evidence="1">Belongs to the bacterial ribosomal protein bL19 family.</text>
</comment>
<gene>
    <name evidence="1" type="primary">rplS</name>
    <name type="ordered locus">Dshi_0341</name>
</gene>
<name>RL19_DINSH</name>
<proteinExistence type="inferred from homology"/>